<reference key="1">
    <citation type="journal article" date="2006" name="Science">
        <title>Phytophthora genome sequences uncover evolutionary origins and mechanisms of pathogenesis.</title>
        <authorList>
            <person name="Tyler B.M."/>
            <person name="Tripathy S."/>
            <person name="Zhang X."/>
            <person name="Dehal P."/>
            <person name="Jiang R.H.Y."/>
            <person name="Aerts A."/>
            <person name="Arredondo F.D."/>
            <person name="Baxter L."/>
            <person name="Bensasson D."/>
            <person name="Beynon J.L."/>
            <person name="Chapman J."/>
            <person name="Damasceno C.M.B."/>
            <person name="Dorrance A.E."/>
            <person name="Dou D."/>
            <person name="Dickerman A.W."/>
            <person name="Dubchak I.L."/>
            <person name="Garbelotto M."/>
            <person name="Gijzen M."/>
            <person name="Gordon S.G."/>
            <person name="Govers F."/>
            <person name="Grunwald N.J."/>
            <person name="Huang W."/>
            <person name="Ivors K.L."/>
            <person name="Jones R.W."/>
            <person name="Kamoun S."/>
            <person name="Krampis K."/>
            <person name="Lamour K.H."/>
            <person name="Lee M.-K."/>
            <person name="McDonald W.H."/>
            <person name="Medina M."/>
            <person name="Meijer H.J.G."/>
            <person name="Nordberg E.K."/>
            <person name="Maclean D.J."/>
            <person name="Ospina-Giraldo M.D."/>
            <person name="Morris P.F."/>
            <person name="Phuntumart V."/>
            <person name="Putnam N.H."/>
            <person name="Rash S."/>
            <person name="Rose J.K.C."/>
            <person name="Sakihama Y."/>
            <person name="Salamov A.A."/>
            <person name="Savidor A."/>
            <person name="Scheuring C.F."/>
            <person name="Smith B.M."/>
            <person name="Sobral B.W.S."/>
            <person name="Terry A."/>
            <person name="Torto-Alalibo T.A."/>
            <person name="Win J."/>
            <person name="Xu Z."/>
            <person name="Zhang H."/>
            <person name="Grigoriev I.V."/>
            <person name="Rokhsar D.S."/>
            <person name="Boore J.L."/>
        </authorList>
    </citation>
    <scope>NUCLEOTIDE SEQUENCE [LARGE SCALE GENOMIC DNA]</scope>
    <source>
        <strain>P6497</strain>
    </source>
</reference>
<reference key="2">
    <citation type="journal article" date="2015" name="Plant Cell">
        <title>A Phytophthora sojae glycoside hydrolase 12 protein is a major virulence factor during soybean infection and is recognized as a PAMP.</title>
        <authorList>
            <person name="Ma Z."/>
            <person name="Song T."/>
            <person name="Zhu L."/>
            <person name="Ye W."/>
            <person name="Wang Y."/>
            <person name="Shao Y."/>
            <person name="Dong S."/>
            <person name="Zhang Z."/>
            <person name="Dou D."/>
            <person name="Zheng X."/>
            <person name="Tyler B.M."/>
            <person name="Wang Y."/>
        </authorList>
    </citation>
    <scope>IDENTIFICATION BY MASS SPECTROMETRY</scope>
    <scope>FUNCTION</scope>
    <scope>INDUCTION</scope>
    <scope>DISRUPTION PHENOTYPE</scope>
    <scope>SUBCELLULAR LOCATION</scope>
    <scope>CATALYTIC ACTIVITY</scope>
    <scope>ACTIVE SITE</scope>
    <scope>MUTAGENESIS OF GLU-136 AND GLU-222</scope>
</reference>
<reference key="3">
    <citation type="journal article" date="2017" name="Science">
        <title>A paralogous decoy protects Phytophthora sojae apoplastic effector PsXEG1 from a host inhibitor.</title>
        <authorList>
            <person name="Ma Z."/>
            <person name="Zhu L."/>
            <person name="Song T."/>
            <person name="Wang Y."/>
            <person name="Zhang Q."/>
            <person name="Xia Y."/>
            <person name="Qiu M."/>
            <person name="Lin Y."/>
            <person name="Li H."/>
            <person name="Kong L."/>
            <person name="Fang Y."/>
            <person name="Ye W."/>
            <person name="Wang Y."/>
            <person name="Dong S."/>
            <person name="Zheng X."/>
            <person name="Tyler B.M."/>
            <person name="Wang Y."/>
        </authorList>
    </citation>
    <scope>FUNCTION</scope>
    <scope>SUBCELLULAR LOCATION</scope>
    <scope>INTERACTION WITH HOST GIP1</scope>
    <scope>MUTAGENESIS OF GLU-136 AND GLU-222</scope>
    <scope>CATALYTIC ACTIVITY</scope>
    <scope>ACTIVITY REGULATION</scope>
</reference>
<gene>
    <name evidence="5" type="primary">XEG1</name>
    <name type="ORF">PHYSODRAFT_559651</name>
</gene>
<organism>
    <name type="scientific">Phytophthora sojae (strain P6497)</name>
    <name type="common">Soybean stem and root rot agent</name>
    <name type="synonym">Phytophthora megasperma f. sp. glycines</name>
    <dbReference type="NCBI Taxonomy" id="1094619"/>
    <lineage>
        <taxon>Eukaryota</taxon>
        <taxon>Sar</taxon>
        <taxon>Stramenopiles</taxon>
        <taxon>Oomycota</taxon>
        <taxon>Peronosporales</taxon>
        <taxon>Peronosporaceae</taxon>
        <taxon>Phytophthora</taxon>
    </lineage>
</organism>
<proteinExistence type="evidence at protein level"/>
<comment type="function">
    <text evidence="3 4">Glycoside hydrolase that exhibits xyloglucanase activity (PubMed:26163574). Acts as an important virulence factor during P.sojae infection but also acts as a pathogen-associated molecular pattern (PAMP) in soybean and solanaceous species, where it can trigger defense responses including cell death. XEG1-induced cell death can be suppressed by P.sojae RxLR effectors. The PAMP activity is independent of its xyloglucanase activity (PubMed:26163574). XEG1 induces plant defense responses in a RLP kinase Serk3/Bak1-dependent manner in Nicotiana benthamiana. Moreover, the perception of XEG1 occurs independently of the perception of ethylene-inducing xylanase Eix2 in Tomato (PubMed:26163574). With truncated paralog XLP1, is required to elevate apoplastic sugar during P.sojae infection (PubMed:28082413).</text>
</comment>
<comment type="catalytic activity">
    <reaction evidence="3">
        <text>xyloglucan + H2O = xyloglucan oligosaccharides.</text>
        <dbReference type="EC" id="3.2.1.151"/>
    </reaction>
</comment>
<comment type="activity regulation">
    <text evidence="4">The xyloglucanase activity is inhibited by the binding of the host apoplastic glucanase inhibitor GIP1.</text>
</comment>
<comment type="subunit">
    <text evidence="4">Interacts with host apoplastic glucanase inhibitor GIP1.</text>
</comment>
<comment type="subcellular location">
    <subcellularLocation>
        <location evidence="3 4">Secreted</location>
    </subcellularLocation>
    <subcellularLocation>
        <location evidence="3">Host</location>
    </subcellularLocation>
    <text evidence="3">Targeted to the host apoplast in order to trigger cell death.</text>
</comment>
<comment type="induction">
    <text evidence="3">Expression is strongly induced within 30 minutes of infection of soybean and then slowly declines.</text>
</comment>
<comment type="disruption phenotype">
    <text evidence="3">Severely reduces virulence.</text>
</comment>
<comment type="similarity">
    <text evidence="6">Belongs to the glycosyl hydrolase 12 (cellulase H) family.</text>
</comment>
<protein>
    <recommendedName>
        <fullName evidence="5">Xyloglucan-specific endo-beta-1,4-glucanase 1</fullName>
        <ecNumber evidence="3">3.2.1.151</ecNumber>
    </recommendedName>
    <alternativeName>
        <fullName evidence="5">Glycoside hydrolase family 12 protein XEG1</fullName>
        <shortName evidence="5">GH12 protein XEG1</shortName>
    </alternativeName>
</protein>
<sequence>MKGFFAGVVAAATLAVASAGDYCGQWDWAKSTNYIVYNNLWNKNAAASGSQCTGVDKISGSTIAWHTSYTWTGGAATEVKSYSNAALVFSKKQIKNIKSIPTKMKYSYSHSSGTFVADVSYDLFTSSTASGSNEYEIMIWLAAYGGAGPISSTGKAIATVTIGSNSFKLYKGPNGSTTVFSFVATKTITNFSADLQKFLSYLTKNQGLPSSQYLITLEAGTEPFVGTNAKMTVSSFSAAVN</sequence>
<evidence type="ECO:0000255" key="1"/>
<evidence type="ECO:0000255" key="2">
    <source>
        <dbReference type="PROSITE-ProRule" id="PRU00498"/>
    </source>
</evidence>
<evidence type="ECO:0000269" key="3">
    <source>
    </source>
</evidence>
<evidence type="ECO:0000269" key="4">
    <source>
    </source>
</evidence>
<evidence type="ECO:0000303" key="5">
    <source>
    </source>
</evidence>
<evidence type="ECO:0000305" key="6"/>
<evidence type="ECO:0000305" key="7">
    <source>
    </source>
</evidence>
<evidence type="ECO:0007829" key="8">
    <source>
        <dbReference type="PDB" id="7DRC"/>
    </source>
</evidence>
<feature type="signal peptide" evidence="3">
    <location>
        <begin position="1"/>
        <end position="19"/>
    </location>
</feature>
<feature type="chain" id="PRO_5003472095" description="Xyloglucan-specific endo-beta-1,4-glucanase 1" evidence="1">
    <location>
        <begin position="20"/>
        <end position="241"/>
    </location>
</feature>
<feature type="active site" evidence="7">
    <location>
        <position position="136"/>
    </location>
</feature>
<feature type="active site" evidence="7">
    <location>
        <position position="222"/>
    </location>
</feature>
<feature type="glycosylation site" description="N-linked (GlcNAc...) asparagine" evidence="2">
    <location>
        <position position="174"/>
    </location>
</feature>
<feature type="glycosylation site" description="N-linked (GlcNAc...) asparagine" evidence="2">
    <location>
        <position position="190"/>
    </location>
</feature>
<feature type="mutagenesis site" description="Abolishes xyloglucan-degrading endoglucanase activity, but does not affect elicitor activity." evidence="3 4">
    <original>E</original>
    <variation>D</variation>
    <location>
        <position position="136"/>
    </location>
</feature>
<feature type="mutagenesis site" description="Abolishes xyloglucan-degrading endoglucanase activity, but does not affect elicitor activity." evidence="3 4">
    <original>E</original>
    <variation>D</variation>
    <location>
        <position position="222"/>
    </location>
</feature>
<feature type="strand" evidence="8">
    <location>
        <begin position="28"/>
        <end position="30"/>
    </location>
</feature>
<feature type="strand" evidence="8">
    <location>
        <begin position="32"/>
        <end position="37"/>
    </location>
</feature>
<feature type="helix" evidence="8">
    <location>
        <begin position="43"/>
        <end position="45"/>
    </location>
</feature>
<feature type="strand" evidence="8">
    <location>
        <begin position="46"/>
        <end position="59"/>
    </location>
</feature>
<feature type="strand" evidence="8">
    <location>
        <begin position="62"/>
        <end position="75"/>
    </location>
</feature>
<feature type="strand" evidence="8">
    <location>
        <begin position="84"/>
        <end position="87"/>
    </location>
</feature>
<feature type="helix" evidence="8">
    <location>
        <begin position="94"/>
        <end position="96"/>
    </location>
</feature>
<feature type="strand" evidence="8">
    <location>
        <begin position="101"/>
        <end position="109"/>
    </location>
</feature>
<feature type="strand" evidence="8">
    <location>
        <begin position="116"/>
        <end position="131"/>
    </location>
</feature>
<feature type="strand" evidence="8">
    <location>
        <begin position="135"/>
        <end position="144"/>
    </location>
</feature>
<feature type="strand" evidence="8">
    <location>
        <begin position="147"/>
        <end position="149"/>
    </location>
</feature>
<feature type="strand" evidence="8">
    <location>
        <begin position="152"/>
        <end position="155"/>
    </location>
</feature>
<feature type="strand" evidence="8">
    <location>
        <begin position="158"/>
        <end position="161"/>
    </location>
</feature>
<feature type="strand" evidence="8">
    <location>
        <begin position="166"/>
        <end position="174"/>
    </location>
</feature>
<feature type="strand" evidence="8">
    <location>
        <begin position="177"/>
        <end position="186"/>
    </location>
</feature>
<feature type="strand" evidence="8">
    <location>
        <begin position="189"/>
        <end position="194"/>
    </location>
</feature>
<feature type="helix" evidence="8">
    <location>
        <begin position="195"/>
        <end position="204"/>
    </location>
</feature>
<feature type="strand" evidence="8">
    <location>
        <begin position="213"/>
        <end position="221"/>
    </location>
</feature>
<feature type="strand" evidence="8">
    <location>
        <begin position="224"/>
        <end position="238"/>
    </location>
</feature>
<keyword id="KW-0002">3D-structure</keyword>
<keyword id="KW-0119">Carbohydrate metabolism</keyword>
<keyword id="KW-0325">Glycoprotein</keyword>
<keyword id="KW-0326">Glycosidase</keyword>
<keyword id="KW-0378">Hydrolase</keyword>
<keyword id="KW-0624">Polysaccharide degradation</keyword>
<keyword id="KW-1185">Reference proteome</keyword>
<keyword id="KW-0964">Secreted</keyword>
<keyword id="KW-0732">Signal</keyword>
<keyword id="KW-0843">Virulence</keyword>
<name>XEG1_PHYSP</name>
<accession>G4ZHR2</accession>
<dbReference type="EC" id="3.2.1.151" evidence="3"/>
<dbReference type="EMBL" id="JH159154">
    <property type="protein sequence ID" value="EGZ16757.1"/>
    <property type="molecule type" value="Genomic_DNA"/>
</dbReference>
<dbReference type="RefSeq" id="XP_009525815.1">
    <property type="nucleotide sequence ID" value="XM_009527520.1"/>
</dbReference>
<dbReference type="PDB" id="7DRC">
    <property type="method" value="EM"/>
    <property type="resolution" value="2.92 A"/>
    <property type="chains" value="A=1-241"/>
</dbReference>
<dbReference type="PDB" id="7W3V">
    <property type="method" value="EM"/>
    <property type="resolution" value="3.11 A"/>
    <property type="chains" value="A=1-241"/>
</dbReference>
<dbReference type="PDBsum" id="7DRC"/>
<dbReference type="PDBsum" id="7W3V"/>
<dbReference type="SMR" id="G4ZHR2"/>
<dbReference type="STRING" id="1094619.G4ZHR2"/>
<dbReference type="GlyCosmos" id="G4ZHR2">
    <property type="glycosylation" value="2 sites, No reported glycans"/>
</dbReference>
<dbReference type="EnsemblProtists" id="EGZ16757">
    <property type="protein sequence ID" value="EGZ16757"/>
    <property type="gene ID" value="PHYSODRAFT_559651"/>
</dbReference>
<dbReference type="GeneID" id="20663425"/>
<dbReference type="KEGG" id="psoj:PHYSODRAFT_559651"/>
<dbReference type="InParanoid" id="G4ZHR2"/>
<dbReference type="OMA" id="NLWGQAQ"/>
<dbReference type="PHI-base" id="PHI:10952"/>
<dbReference type="PHI-base" id="PHI:6868"/>
<dbReference type="Proteomes" id="UP000002640">
    <property type="component" value="Unassembled WGS sequence"/>
</dbReference>
<dbReference type="GO" id="GO:0005576">
    <property type="term" value="C:extracellular region"/>
    <property type="evidence" value="ECO:0007669"/>
    <property type="project" value="UniProtKB-SubCell"/>
</dbReference>
<dbReference type="GO" id="GO:0018995">
    <property type="term" value="C:host cellular component"/>
    <property type="evidence" value="ECO:0007669"/>
    <property type="project" value="UniProtKB-SubCell"/>
</dbReference>
<dbReference type="GO" id="GO:0008810">
    <property type="term" value="F:cellulase activity"/>
    <property type="evidence" value="ECO:0007669"/>
    <property type="project" value="InterPro"/>
</dbReference>
<dbReference type="GO" id="GO:0033946">
    <property type="term" value="F:xyloglucan-specific endo-beta-1,4-glucanase activity"/>
    <property type="evidence" value="ECO:0007669"/>
    <property type="project" value="UniProtKB-EC"/>
</dbReference>
<dbReference type="GO" id="GO:0000272">
    <property type="term" value="P:polysaccharide catabolic process"/>
    <property type="evidence" value="ECO:0007669"/>
    <property type="project" value="UniProtKB-KW"/>
</dbReference>
<dbReference type="GO" id="GO:0052009">
    <property type="term" value="P:symbiont-mediated disruption of host cell wall"/>
    <property type="evidence" value="ECO:0000269"/>
    <property type="project" value="SigSci"/>
</dbReference>
<dbReference type="Gene3D" id="2.60.120.180">
    <property type="match status" value="1"/>
</dbReference>
<dbReference type="InterPro" id="IPR013320">
    <property type="entry name" value="ConA-like_dom_sf"/>
</dbReference>
<dbReference type="InterPro" id="IPR013319">
    <property type="entry name" value="GH11/12"/>
</dbReference>
<dbReference type="InterPro" id="IPR002594">
    <property type="entry name" value="GH12"/>
</dbReference>
<dbReference type="PANTHER" id="PTHR34002">
    <property type="entry name" value="BLR1656 PROTEIN"/>
    <property type="match status" value="1"/>
</dbReference>
<dbReference type="PANTHER" id="PTHR34002:SF9">
    <property type="entry name" value="XYLOGLUCAN-SPECIFIC ENDO-BETA-1,4-GLUCANASE A"/>
    <property type="match status" value="1"/>
</dbReference>
<dbReference type="Pfam" id="PF01670">
    <property type="entry name" value="Glyco_hydro_12"/>
    <property type="match status" value="1"/>
</dbReference>
<dbReference type="SUPFAM" id="SSF49899">
    <property type="entry name" value="Concanavalin A-like lectins/glucanases"/>
    <property type="match status" value="1"/>
</dbReference>